<comment type="function">
    <text evidence="4 5 6 8 9 10">Membrane-bound E3 ubiquitin ligase expressed during late stages of lytic replication to mediate polyubiquitination of various host membrane proteins related to the immune response (PubMed:24899205). Promotes ubiquitination and subsequent degradation of host MHC-I and CD1D molecules, DC-SIGN and DC-SIGNR, presumably to prevent lysis of infected cells by cytotoxic T-lymphocytes (PubMed:10859362, PubMed:11756476). Binds target molecules through transmembrane interaction. E3 ubiquitin-protein ligases accept ubiquitin from specific E2 ubiquitin-conjugating enzymes, and then transfer it to target protein. The result of this ubiquitination is the enhancement of the endocytosis of the target chain and the delivery to the lysosome, where it is proteolytically destroyed. Induces ubiquitination not only on lysines, but also on cysteine residues.</text>
</comment>
<comment type="catalytic activity">
    <reaction evidence="9">
        <text>[E2 ubiquitin-conjugating enzyme]-S-ubiquitinyl-L-cysteine + [acceptor protein]-L-cysteine = [E2 ubiquitin-conjugating enzyme]-L-cysteine + [acceptor protein]-S-ubiquitinyl-L-cysteine.</text>
        <dbReference type="EC" id="2.3.2.36"/>
    </reaction>
</comment>
<comment type="pathway">
    <text>Protein modification; protein ubiquitination.</text>
</comment>
<comment type="subunit">
    <text evidence="11">Binds human MHC-I and CD1D.</text>
</comment>
<comment type="interaction">
    <interactant intactId="EBI-6149947">
        <id>P90495</id>
    </interactant>
    <interactant intactId="EBI-7922689">
        <id>P88941</id>
    </interactant>
    <organismsDiffer>true</organismsDiffer>
    <experiments>2</experiments>
</comment>
<comment type="interaction">
    <interactant intactId="EBI-6149947">
        <id>P90495</id>
    </interactant>
    <interactant intactId="EBI-7923148">
        <id>P88951</id>
    </interactant>
    <organismsDiffer>true</organismsDiffer>
    <experiments>2</experiments>
</comment>
<comment type="subcellular location">
    <subcellularLocation>
        <location evidence="4">Host cell membrane</location>
        <topology evidence="4">Multi-pass membrane protein</topology>
    </subcellularLocation>
    <subcellularLocation>
        <location evidence="4">Host endoplasmic reticulum</location>
    </subcellularLocation>
    <text>Probably exerts its effects at the plasma membrane during viral infection.</text>
</comment>
<comment type="miscellaneous">
    <text>Specific for HLA-A, HLA-B, HLA-C and HLA-E alleles.</text>
</comment>
<proteinExistence type="evidence at protein level"/>
<reference key="1">
    <citation type="journal article" date="1997" name="J. Virol.">
        <title>A single 13-kilobase divergent locus in the Kaposi sarcoma-associated herpesvirus (human herpesvirus 8) genome contains nine open reading frames that are homologous to or related to cellular proteins.</title>
        <authorList>
            <person name="Nicholas J."/>
            <person name="Ruvolo V."/>
            <person name="Zong J."/>
            <person name="Ciufo D."/>
            <person name="Guo H.-G."/>
            <person name="Reitz M.S."/>
            <person name="Hayward G.S."/>
        </authorList>
    </citation>
    <scope>NUCLEOTIDE SEQUENCE [GENOMIC DNA]</scope>
</reference>
<reference key="2">
    <citation type="journal article" date="2001" name="J. Virol.">
        <title>Transcription pattern of human herpesvirus 8 open reading frame k3 in primary effusion lymphoma and kaposi's sarcoma.</title>
        <authorList>
            <person name="Rimessi P."/>
            <person name="Bonaccorsi A."/>
            <person name="Sturzl M."/>
            <person name="Fabris M."/>
            <person name="Brocca-Cofano E."/>
            <person name="Caputo A."/>
            <person name="Melucci-Vigo G."/>
            <person name="Falchi M."/>
            <person name="Cafaro A."/>
            <person name="Cassai E."/>
            <person name="Ensoli B."/>
            <person name="Monini P."/>
        </authorList>
    </citation>
    <scope>NUCLEOTIDE SEQUENCE [MRNA]</scope>
</reference>
<reference key="3">
    <citation type="submission" date="2001-07" db="EMBL/GenBank/DDBJ databases">
        <title>The genome of human herpesvirus 8 cloned from Kaposi's sarcoma.</title>
        <authorList>
            <person name="Neipel F."/>
            <person name="Albrecht J.-C."/>
            <person name="Ensser A."/>
            <person name="Huang Y.-Q."/>
            <person name="Li J.J."/>
            <person name="Friedman-Kien A.E."/>
            <person name="Fleckenstein B."/>
        </authorList>
    </citation>
    <scope>NUCLEOTIDE SEQUENCE [GENOMIC DNA]</scope>
</reference>
<reference key="4">
    <citation type="journal article" date="1996" name="Proc. Natl. Acad. Sci. U.S.A.">
        <title>Nucleotide sequence of the Kaposi sarcoma-associated herpesvirus (HHV8).</title>
        <authorList>
            <person name="Russo J.J."/>
            <person name="Bohenzky R.A."/>
            <person name="Chien M.-C."/>
            <person name="Chen J."/>
            <person name="Yan M."/>
            <person name="Maddalena D."/>
            <person name="Parry J.P."/>
            <person name="Peruzzi D."/>
            <person name="Edelman I.S."/>
            <person name="Chang Y."/>
            <person name="Moore P.S."/>
        </authorList>
    </citation>
    <scope>NUCLEOTIDE SEQUENCE [LARGE SCALE GENOMIC DNA]</scope>
</reference>
<reference key="5">
    <citation type="journal article" date="2006" name="J. Gen. Virol.">
        <title>Kaposi's sarcoma-associated herpesvirus immune modulation: an overview.</title>
        <authorList>
            <person name="Rezaee S.A.R."/>
            <person name="Cunningham C."/>
            <person name="Davison A.J."/>
            <person name="Blackbourn D.J."/>
        </authorList>
    </citation>
    <scope>NUCLEOTIDE SEQUENCE [LARGE SCALE GENOMIC DNA]</scope>
</reference>
<reference key="6">
    <citation type="journal article" date="2000" name="Proc. Natl. Acad. Sci. U.S.A.">
        <title>Kaposi's sarcoma-associated herpesvirus encodes two proteins that block cell surface display of MHC class I chains by enhancing their endocytosis.</title>
        <authorList>
            <person name="Coscoy L."/>
            <person name="Ganem D."/>
        </authorList>
    </citation>
    <scope>FUNCTION</scope>
</reference>
<reference key="7">
    <citation type="journal article" date="2000" name="J. Virol.">
        <title>Downregulation of major histocompatibility complex class I molecules by Kaposi's sarcoma-associated herpesvirus K3 and K5 proteins.</title>
        <authorList>
            <person name="Ishido S."/>
            <person name="Wang C."/>
            <person name="Lee B.-S."/>
            <person name="Cohen G.B."/>
            <person name="Jung J.U."/>
        </authorList>
    </citation>
    <scope>FUNCTION</scope>
    <scope>SUBCELLULAR LOCATION</scope>
</reference>
<reference key="8">
    <citation type="journal article" date="2001" name="J. Cell Biol.">
        <title>A novel class of herpesvirus-encoded membrane-bound E3 ubiquitin ligases regulates endocytosis of proteins involved in immune recognition.</title>
        <authorList>
            <person name="Coscoy L."/>
            <person name="Sanchez D.J."/>
            <person name="Ganem D."/>
        </authorList>
    </citation>
    <scope>FUNCTION</scope>
</reference>
<reference key="9">
    <citation type="journal article" date="2002" name="EMBO J.">
        <title>Ubiquitylation of MHC class I by the K3 viral protein signals internalization and TSG101-dependent degradation.</title>
        <authorList>
            <person name="Hewitt E.W."/>
            <person name="Duncan L."/>
            <person name="Mufti D."/>
            <person name="Baker J."/>
            <person name="Stevenson P.G."/>
            <person name="Lehner P.J."/>
        </authorList>
    </citation>
    <scope>INTERACTION WITH HUMAN HLA-A</scope>
    <scope>DOMAIN RINGV-TYPE ZINC-FINGER</scope>
    <scope>MUTAGENESIS OF TRP-41</scope>
</reference>
<reference key="10">
    <citation type="journal article" date="2005" name="J. Clin. Invest.">
        <title>Regulation of CD1d expression and function by a herpesvirus infection.</title>
        <authorList>
            <person name="Sanchez D.J."/>
            <person name="Gumperz J.E."/>
            <person name="Ganem D."/>
        </authorList>
    </citation>
    <scope>FUNCTION</scope>
</reference>
<reference key="11">
    <citation type="journal article" date="2005" name="Science">
        <title>Ubiquitination on nonlysine residues by a viral E3 ubiquitin ligase.</title>
        <authorList>
            <person name="Cadwell K."/>
            <person name="Coscoy L."/>
        </authorList>
    </citation>
    <scope>FUNCTION</scope>
    <scope>CATALYTIC ACTIVITY</scope>
</reference>
<reference key="12">
    <citation type="journal article" date="2013" name="PLoS ONE">
        <title>Kaposi's sarcoma-associated herpesvirus K3 and K5 proteins down regulate both DC-SIGN and DC-SIGNR.</title>
        <authorList>
            <person name="Lang S.M."/>
            <person name="Bynoe M.O."/>
            <person name="Karki R."/>
            <person name="Tartell M.A."/>
            <person name="Means R.E."/>
        </authorList>
    </citation>
    <scope>FUNCTION</scope>
</reference>
<reference key="13">
    <citation type="journal article" date="2014" name="J. Virol.">
        <title>Kaposi's sarcoma-associated herpesvirus K3 and K5 ubiquitin E3 ligases have stage-specific immune evasion roles during lytic replication.</title>
        <authorList>
            <person name="Brulois K."/>
            <person name="Toth Z."/>
            <person name="Wong L.Y."/>
            <person name="Feng P."/>
            <person name="Gao S.J."/>
            <person name="Ensser A."/>
            <person name="Jung J.U."/>
        </authorList>
    </citation>
    <scope>FUNCTION</scope>
</reference>
<reference key="14">
    <citation type="journal article" date="2004" name="J. Biol. Chem.">
        <title>Solution structure of the Kaposi's sarcoma-associated herpesvirus K3 N-terminal domain reveals a Novel E2-binding C4HC3-type RING domain.</title>
        <authorList>
            <person name="Dodd R.B."/>
            <person name="Allen M.D."/>
            <person name="Brown S.E."/>
            <person name="Sanderson C.M."/>
            <person name="Duncan L.M."/>
            <person name="Lehner P.J."/>
            <person name="Bycroft M."/>
            <person name="Read R.J."/>
        </authorList>
    </citation>
    <scope>STRUCTURE BY NMR OF 1-60</scope>
</reference>
<organism>
    <name type="scientific">Human herpesvirus 8 type P (isolate GK18)</name>
    <name type="common">HHV-8</name>
    <name type="synonym">Kaposi's sarcoma-associated herpesvirus</name>
    <dbReference type="NCBI Taxonomy" id="868565"/>
    <lineage>
        <taxon>Viruses</taxon>
        <taxon>Duplodnaviria</taxon>
        <taxon>Heunggongvirae</taxon>
        <taxon>Peploviricota</taxon>
        <taxon>Herviviricetes</taxon>
        <taxon>Herpesvirales</taxon>
        <taxon>Orthoherpesviridae</taxon>
        <taxon>Gammaherpesvirinae</taxon>
        <taxon>Rhadinovirus</taxon>
        <taxon>Rhadinovirus humangamma8</taxon>
        <taxon>Human herpesvirus 8</taxon>
    </lineage>
</organism>
<gene>
    <name type="primary">K3</name>
</gene>
<keyword id="KW-0002">3D-structure</keyword>
<keyword id="KW-0244">Early protein</keyword>
<keyword id="KW-1032">Host cell membrane</keyword>
<keyword id="KW-1038">Host endoplasmic reticulum</keyword>
<keyword id="KW-1043">Host membrane</keyword>
<keyword id="KW-0945">Host-virus interaction</keyword>
<keyword id="KW-1090">Inhibition of host innate immune response by virus</keyword>
<keyword id="KW-1091">Inhibition of host interferon receptors by virus</keyword>
<keyword id="KW-1114">Inhibition of host interferon signaling pathway by virus</keyword>
<keyword id="KW-0922">Interferon antiviral system evasion</keyword>
<keyword id="KW-0472">Membrane</keyword>
<keyword id="KW-0479">Metal-binding</keyword>
<keyword id="KW-1185">Reference proteome</keyword>
<keyword id="KW-0808">Transferase</keyword>
<keyword id="KW-0812">Transmembrane</keyword>
<keyword id="KW-1133">Transmembrane helix</keyword>
<keyword id="KW-0833">Ubl conjugation pathway</keyword>
<keyword id="KW-0899">Viral immunoevasion</keyword>
<keyword id="KW-0862">Zinc</keyword>
<keyword id="KW-0863">Zinc-finger</keyword>
<sequence length="333" mass="36005">MEDEDVPVCWICNEELGNERFRACGCTGELENVHRSCLSTWLTISRNTACQICGVVYNTRVVWRPLREMTLLPRLTYQEGLELIVFIFIMTLGAAGLAAATWVWLYIVGGHDPEIDHVAAAAYYVFFVFYQLFVVFGLGAFFHMMRHVGRAYAAVNTRVEVFPYRPRPTSPECAVEEIELQEILPRGDNQDEEGPAGAAPGDQNGPAGAAPGDQDGPADGAPVHRDSEESVDEAAGYKEAGEPTHNDGRDDNVEPTAVGCDCNNLGAERYRATYCGGYVGAQSGDGAYSVSCHNKAGPSSLVDILPQGLPGGGYGSMGVIRKRSAVSSALMFH</sequence>
<accession>P90495</accession>
<accession>O40920</accession>
<accession>Q2HRC5</accession>
<evidence type="ECO:0000255" key="1"/>
<evidence type="ECO:0000255" key="2">
    <source>
        <dbReference type="PROSITE-ProRule" id="PRU00623"/>
    </source>
</evidence>
<evidence type="ECO:0000256" key="3">
    <source>
        <dbReference type="SAM" id="MobiDB-lite"/>
    </source>
</evidence>
<evidence type="ECO:0000269" key="4">
    <source>
    </source>
</evidence>
<evidence type="ECO:0000269" key="5">
    <source>
    </source>
</evidence>
<evidence type="ECO:0000269" key="6">
    <source>
    </source>
</evidence>
<evidence type="ECO:0000269" key="7">
    <source>
    </source>
</evidence>
<evidence type="ECO:0000269" key="8">
    <source>
    </source>
</evidence>
<evidence type="ECO:0000269" key="9">
    <source>
    </source>
</evidence>
<evidence type="ECO:0000269" key="10">
    <source>
    </source>
</evidence>
<evidence type="ECO:0000305" key="11"/>
<evidence type="ECO:0007829" key="12">
    <source>
        <dbReference type="PDB" id="1VYX"/>
    </source>
</evidence>
<feature type="chain" id="PRO_0000221389" description="E3 ubiquitin-protein ligase MIR1">
    <location>
        <begin position="1"/>
        <end position="333"/>
    </location>
</feature>
<feature type="topological domain" description="Cytoplasmic" evidence="1">
    <location>
        <begin position="1"/>
        <end position="82"/>
    </location>
</feature>
<feature type="transmembrane region" description="Helical" evidence="1">
    <location>
        <begin position="83"/>
        <end position="103"/>
    </location>
</feature>
<feature type="topological domain" description="Extracellular" evidence="1">
    <location>
        <begin position="104"/>
        <end position="121"/>
    </location>
</feature>
<feature type="transmembrane region" description="Helical" evidence="1">
    <location>
        <begin position="122"/>
        <end position="142"/>
    </location>
</feature>
<feature type="topological domain" description="Cytoplasmic" evidence="1">
    <location>
        <begin position="143"/>
        <end position="333"/>
    </location>
</feature>
<feature type="zinc finger region" description="RING-CH-type" evidence="2">
    <location>
        <begin position="1"/>
        <end position="60"/>
    </location>
</feature>
<feature type="region of interest" description="Disordered" evidence="3">
    <location>
        <begin position="187"/>
        <end position="257"/>
    </location>
</feature>
<feature type="compositionally biased region" description="Low complexity" evidence="3">
    <location>
        <begin position="195"/>
        <end position="221"/>
    </location>
</feature>
<feature type="compositionally biased region" description="Basic and acidic residues" evidence="3">
    <location>
        <begin position="235"/>
        <end position="252"/>
    </location>
</feature>
<feature type="binding site" evidence="2">
    <location>
        <position position="9"/>
    </location>
    <ligand>
        <name>Zn(2+)</name>
        <dbReference type="ChEBI" id="CHEBI:29105"/>
        <label>1</label>
    </ligand>
</feature>
<feature type="binding site" evidence="2">
    <location>
        <position position="12"/>
    </location>
    <ligand>
        <name>Zn(2+)</name>
        <dbReference type="ChEBI" id="CHEBI:29105"/>
        <label>1</label>
    </ligand>
</feature>
<feature type="binding site" evidence="2">
    <location>
        <position position="24"/>
    </location>
    <ligand>
        <name>Zn(2+)</name>
        <dbReference type="ChEBI" id="CHEBI:29105"/>
        <label>2</label>
    </ligand>
</feature>
<feature type="binding site" evidence="2">
    <location>
        <position position="26"/>
    </location>
    <ligand>
        <name>Zn(2+)</name>
        <dbReference type="ChEBI" id="CHEBI:29105"/>
        <label>2</label>
    </ligand>
</feature>
<feature type="binding site" evidence="2">
    <location>
        <position position="34"/>
    </location>
    <ligand>
        <name>Zn(2+)</name>
        <dbReference type="ChEBI" id="CHEBI:29105"/>
        <label>1</label>
    </ligand>
</feature>
<feature type="binding site" evidence="2">
    <location>
        <position position="37"/>
    </location>
    <ligand>
        <name>Zn(2+)</name>
        <dbReference type="ChEBI" id="CHEBI:29105"/>
        <label>1</label>
    </ligand>
</feature>
<feature type="binding site" evidence="2">
    <location>
        <position position="50"/>
    </location>
    <ligand>
        <name>Zn(2+)</name>
        <dbReference type="ChEBI" id="CHEBI:29105"/>
        <label>2</label>
    </ligand>
</feature>
<feature type="binding site" evidence="2">
    <location>
        <position position="53"/>
    </location>
    <ligand>
        <name>Zn(2+)</name>
        <dbReference type="ChEBI" id="CHEBI:29105"/>
        <label>2</label>
    </ligand>
</feature>
<feature type="mutagenesis site" description="Loss of ubiquitination activity and degradation of class I molecules." evidence="7">
    <original>W</original>
    <variation>A</variation>
    <location>
        <position position="41"/>
    </location>
</feature>
<feature type="sequence conflict" description="In Ref. 3; AAB62674 and 5; ABD28858." evidence="11" ref="3 5">
    <location>
        <begin position="195"/>
        <end position="204"/>
    </location>
</feature>
<feature type="sequence conflict" description="In Ref. 3; AAB62674." evidence="11" ref="3">
    <original>A</original>
    <variation>V</variation>
    <location>
        <position position="281"/>
    </location>
</feature>
<feature type="sequence conflict" description="In Ref. 5; ABD28858." evidence="11" ref="5">
    <original>P</original>
    <variation>L</variation>
    <location>
        <position position="310"/>
    </location>
</feature>
<feature type="turn" evidence="12">
    <location>
        <begin position="10"/>
        <end position="13"/>
    </location>
</feature>
<feature type="helix" evidence="12">
    <location>
        <begin position="29"/>
        <end position="31"/>
    </location>
</feature>
<feature type="helix" evidence="12">
    <location>
        <begin position="35"/>
        <end position="45"/>
    </location>
</feature>
<feature type="turn" evidence="12">
    <location>
        <begin position="51"/>
        <end position="53"/>
    </location>
</feature>
<dbReference type="EC" id="2.3.2.36" evidence="9"/>
<dbReference type="EMBL" id="U75698">
    <property type="protein sequence ID" value="AAC57091.1"/>
    <property type="molecule type" value="Genomic_DNA"/>
</dbReference>
<dbReference type="EMBL" id="AF307516">
    <property type="protein sequence ID" value="AAK83788.1"/>
    <property type="molecule type" value="mRNA"/>
</dbReference>
<dbReference type="EMBL" id="AF307517">
    <property type="protein sequence ID" value="AAK83789.1"/>
    <property type="molecule type" value="mRNA"/>
</dbReference>
<dbReference type="EMBL" id="AF307518">
    <property type="protein sequence ID" value="AAK83790.1"/>
    <property type="molecule type" value="mRNA"/>
</dbReference>
<dbReference type="EMBL" id="AF307519">
    <property type="protein sequence ID" value="AAK83791.1"/>
    <property type="molecule type" value="mRNA"/>
</dbReference>
<dbReference type="EMBL" id="U71365">
    <property type="protein sequence ID" value="AAC34939.1"/>
    <property type="molecule type" value="Genomic_DNA"/>
</dbReference>
<dbReference type="EMBL" id="U83350">
    <property type="protein sequence ID" value="AAC56950.1"/>
    <property type="molecule type" value="Genomic_DNA"/>
</dbReference>
<dbReference type="EMBL" id="U93872">
    <property type="protein sequence ID" value="AAB62674.1"/>
    <property type="molecule type" value="Genomic_DNA"/>
</dbReference>
<dbReference type="EMBL" id="AF148805">
    <property type="protein sequence ID" value="ABD28858.1"/>
    <property type="molecule type" value="Genomic_DNA"/>
</dbReference>
<dbReference type="RefSeq" id="YP_001129360.1">
    <property type="nucleotide sequence ID" value="NC_009333.1"/>
</dbReference>
<dbReference type="PDB" id="1VYX">
    <property type="method" value="NMR"/>
    <property type="chains" value="A=1-60"/>
</dbReference>
<dbReference type="PDBsum" id="1VYX"/>
<dbReference type="SMR" id="P90495"/>
<dbReference type="BioGRID" id="1776989">
    <property type="interactions" value="15"/>
</dbReference>
<dbReference type="IntAct" id="P90495">
    <property type="interactions" value="16"/>
</dbReference>
<dbReference type="MINT" id="P90495"/>
<dbReference type="DNASU" id="4961486"/>
<dbReference type="GeneID" id="4961486"/>
<dbReference type="KEGG" id="vg:4961486"/>
<dbReference type="UniPathway" id="UPA00143"/>
<dbReference type="EvolutionaryTrace" id="P90495"/>
<dbReference type="Proteomes" id="UP000000942">
    <property type="component" value="Segment"/>
</dbReference>
<dbReference type="GO" id="GO:0044165">
    <property type="term" value="C:host cell endoplasmic reticulum"/>
    <property type="evidence" value="ECO:0007669"/>
    <property type="project" value="UniProtKB-SubCell"/>
</dbReference>
<dbReference type="GO" id="GO:0020002">
    <property type="term" value="C:host cell plasma membrane"/>
    <property type="evidence" value="ECO:0007669"/>
    <property type="project" value="UniProtKB-SubCell"/>
</dbReference>
<dbReference type="GO" id="GO:0016020">
    <property type="term" value="C:membrane"/>
    <property type="evidence" value="ECO:0007669"/>
    <property type="project" value="UniProtKB-KW"/>
</dbReference>
<dbReference type="GO" id="GO:0016740">
    <property type="term" value="F:transferase activity"/>
    <property type="evidence" value="ECO:0007669"/>
    <property type="project" value="UniProtKB-KW"/>
</dbReference>
<dbReference type="GO" id="GO:0008270">
    <property type="term" value="F:zinc ion binding"/>
    <property type="evidence" value="ECO:0007669"/>
    <property type="project" value="UniProtKB-KW"/>
</dbReference>
<dbReference type="GO" id="GO:0075509">
    <property type="term" value="P:endocytosis involved in viral entry into host cell"/>
    <property type="evidence" value="ECO:0000315"/>
    <property type="project" value="CACAO"/>
</dbReference>
<dbReference type="GO" id="GO:0016567">
    <property type="term" value="P:protein ubiquitination"/>
    <property type="evidence" value="ECO:0007669"/>
    <property type="project" value="UniProtKB-UniPathway"/>
</dbReference>
<dbReference type="GO" id="GO:0039648">
    <property type="term" value="P:symbiont-mediated perturbation of host ubiquitin-like protein modification"/>
    <property type="evidence" value="ECO:0000315"/>
    <property type="project" value="CACAO"/>
</dbReference>
<dbReference type="GO" id="GO:0039504">
    <property type="term" value="P:symbiont-mediated suppression of host adaptive immune response"/>
    <property type="evidence" value="ECO:0000315"/>
    <property type="project" value="CACAO"/>
</dbReference>
<dbReference type="GO" id="GO:0052170">
    <property type="term" value="P:symbiont-mediated suppression of host innate immune response"/>
    <property type="evidence" value="ECO:0007669"/>
    <property type="project" value="UniProtKB-KW"/>
</dbReference>
<dbReference type="GO" id="GO:0039502">
    <property type="term" value="P:symbiont-mediated suppression of host type I interferon-mediated signaling pathway"/>
    <property type="evidence" value="ECO:0007669"/>
    <property type="project" value="UniProtKB-KW"/>
</dbReference>
<dbReference type="GO" id="GO:0006511">
    <property type="term" value="P:ubiquitin-dependent protein catabolic process"/>
    <property type="evidence" value="ECO:0000314"/>
    <property type="project" value="CACAO"/>
</dbReference>
<dbReference type="CDD" id="cd16495">
    <property type="entry name" value="RING_CH-C4HC3_MARCH"/>
    <property type="match status" value="1"/>
</dbReference>
<dbReference type="FunFam" id="3.30.40.10:FF:000990">
    <property type="entry name" value="E3 ubiquitin-protein ligase MIR1"/>
    <property type="match status" value="1"/>
</dbReference>
<dbReference type="Gene3D" id="3.30.40.10">
    <property type="entry name" value="Zinc/RING finger domain, C3HC4 (zinc finger)"/>
    <property type="match status" value="1"/>
</dbReference>
<dbReference type="InterPro" id="IPR011016">
    <property type="entry name" value="Znf_RING-CH"/>
</dbReference>
<dbReference type="InterPro" id="IPR013083">
    <property type="entry name" value="Znf_RING/FYVE/PHD"/>
</dbReference>
<dbReference type="PANTHER" id="PTHR46065">
    <property type="entry name" value="E3 UBIQUITIN-PROTEIN LIGASE MARCH 2/3 FAMILY MEMBER"/>
    <property type="match status" value="1"/>
</dbReference>
<dbReference type="PANTHER" id="PTHR46065:SF3">
    <property type="entry name" value="FI20425P1"/>
    <property type="match status" value="1"/>
</dbReference>
<dbReference type="Pfam" id="PF12906">
    <property type="entry name" value="RINGv"/>
    <property type="match status" value="1"/>
</dbReference>
<dbReference type="SMART" id="SM00744">
    <property type="entry name" value="RINGv"/>
    <property type="match status" value="1"/>
</dbReference>
<dbReference type="SUPFAM" id="SSF57850">
    <property type="entry name" value="RING/U-box"/>
    <property type="match status" value="1"/>
</dbReference>
<dbReference type="PROSITE" id="PS51292">
    <property type="entry name" value="ZF_RING_CH"/>
    <property type="match status" value="1"/>
</dbReference>
<protein>
    <recommendedName>
        <fullName>E3 ubiquitin-protein ligase MIR1</fullName>
        <ecNumber evidence="9">2.3.2.36</ecNumber>
    </recommendedName>
    <alternativeName>
        <fullName>IE1B protein</fullName>
    </alternativeName>
    <alternativeName>
        <fullName>Modulator of immune recognition 1</fullName>
    </alternativeName>
    <alternativeName>
        <fullName>ORF K3</fullName>
    </alternativeName>
    <alternativeName>
        <fullName evidence="11">RING-type E3 ubiquitin transferase MIR1</fullName>
    </alternativeName>
</protein>
<name>MIR1_HHV8P</name>
<organismHost>
    <name type="scientific">Homo sapiens</name>
    <name type="common">Human</name>
    <dbReference type="NCBI Taxonomy" id="9606"/>
</organismHost>